<gene>
    <name type="primary">mecA2</name>
    <name type="ordered locus">BC_1490</name>
</gene>
<dbReference type="EMBL" id="AE016877">
    <property type="protein sequence ID" value="AAP08470.1"/>
    <property type="molecule type" value="Genomic_DNA"/>
</dbReference>
<dbReference type="RefSeq" id="NP_831269.1">
    <property type="nucleotide sequence ID" value="NC_004722.1"/>
</dbReference>
<dbReference type="RefSeq" id="WP_001235402.1">
    <property type="nucleotide sequence ID" value="NZ_CP138336.1"/>
</dbReference>
<dbReference type="SMR" id="Q81FS9"/>
<dbReference type="STRING" id="226900.BC_1490"/>
<dbReference type="KEGG" id="bce:BC1490"/>
<dbReference type="PATRIC" id="fig|226900.8.peg.1467"/>
<dbReference type="HOGENOM" id="CLU_071496_3_0_9"/>
<dbReference type="OrthoDB" id="2085234at2"/>
<dbReference type="Proteomes" id="UP000001417">
    <property type="component" value="Chromosome"/>
</dbReference>
<dbReference type="GO" id="GO:0030674">
    <property type="term" value="F:protein-macromolecule adaptor activity"/>
    <property type="evidence" value="ECO:0007669"/>
    <property type="project" value="UniProtKB-UniRule"/>
</dbReference>
<dbReference type="GO" id="GO:0030420">
    <property type="term" value="P:establishment of competence for transformation"/>
    <property type="evidence" value="ECO:0007669"/>
    <property type="project" value="UniProtKB-KW"/>
</dbReference>
<dbReference type="GO" id="GO:0045808">
    <property type="term" value="P:negative regulation of establishment of competence for transformation"/>
    <property type="evidence" value="ECO:0007669"/>
    <property type="project" value="UniProtKB-UniRule"/>
</dbReference>
<dbReference type="GO" id="GO:0042174">
    <property type="term" value="P:negative regulation of sporulation resulting in formation of a cellular spore"/>
    <property type="evidence" value="ECO:0007669"/>
    <property type="project" value="UniProtKB-UniRule"/>
</dbReference>
<dbReference type="GO" id="GO:0030435">
    <property type="term" value="P:sporulation resulting in formation of a cellular spore"/>
    <property type="evidence" value="ECO:0007669"/>
    <property type="project" value="UniProtKB-KW"/>
</dbReference>
<dbReference type="FunFam" id="3.30.70.1950:FF:000001">
    <property type="entry name" value="Adapter protein MecA"/>
    <property type="match status" value="1"/>
</dbReference>
<dbReference type="Gene3D" id="3.30.70.1950">
    <property type="match status" value="1"/>
</dbReference>
<dbReference type="HAMAP" id="MF_01124">
    <property type="entry name" value="MecA"/>
    <property type="match status" value="1"/>
</dbReference>
<dbReference type="InterPro" id="IPR038471">
    <property type="entry name" value="MecA_C_sf"/>
</dbReference>
<dbReference type="InterPro" id="IPR008681">
    <property type="entry name" value="Neg-reg_MecA"/>
</dbReference>
<dbReference type="NCBIfam" id="NF002781">
    <property type="entry name" value="PRK02899.1"/>
    <property type="match status" value="1"/>
</dbReference>
<dbReference type="PANTHER" id="PTHR39161">
    <property type="entry name" value="ADAPTER PROTEIN MECA"/>
    <property type="match status" value="1"/>
</dbReference>
<dbReference type="PANTHER" id="PTHR39161:SF2">
    <property type="entry name" value="ADAPTER PROTEIN MECA 2"/>
    <property type="match status" value="1"/>
</dbReference>
<dbReference type="Pfam" id="PF05389">
    <property type="entry name" value="MecA"/>
    <property type="match status" value="2"/>
</dbReference>
<dbReference type="PIRSF" id="PIRSF029008">
    <property type="entry name" value="MecA"/>
    <property type="match status" value="1"/>
</dbReference>
<reference key="1">
    <citation type="journal article" date="2003" name="Nature">
        <title>Genome sequence of Bacillus cereus and comparative analysis with Bacillus anthracis.</title>
        <authorList>
            <person name="Ivanova N."/>
            <person name="Sorokin A."/>
            <person name="Anderson I."/>
            <person name="Galleron N."/>
            <person name="Candelon B."/>
            <person name="Kapatral V."/>
            <person name="Bhattacharyya A."/>
            <person name="Reznik G."/>
            <person name="Mikhailova N."/>
            <person name="Lapidus A."/>
            <person name="Chu L."/>
            <person name="Mazur M."/>
            <person name="Goltsman E."/>
            <person name="Larsen N."/>
            <person name="D'Souza M."/>
            <person name="Walunas T."/>
            <person name="Grechkin Y."/>
            <person name="Pusch G."/>
            <person name="Haselkorn R."/>
            <person name="Fonstein M."/>
            <person name="Ehrlich S.D."/>
            <person name="Overbeek R."/>
            <person name="Kyrpides N.C."/>
        </authorList>
    </citation>
    <scope>NUCLEOTIDE SEQUENCE [LARGE SCALE GENOMIC DNA]</scope>
    <source>
        <strain>ATCC 14579 / DSM 31 / CCUG 7414 / JCM 2152 / NBRC 15305 / NCIMB 9373 / NCTC 2599 / NRRL B-3711</strain>
    </source>
</reference>
<sequence>MRLERLNYNKIKIFLTFDDLSERGLTKEDLWRNAPKVQQLFRDMMQEANKELGFEADGPIAVEVFSLQAQGMVVIVTKENQEMDTDDEFRDEFIEMQVTLDESEHILYEFATLDDVINLSNRLYNLGVTGGKLYTWDERFYLWVEEEEQIQLLKADFIAILAEYGNPSTATIYRIMEYGKELMDVNAIEQIHNYFVKKQNLS</sequence>
<keyword id="KW-0178">Competence</keyword>
<keyword id="KW-1185">Reference proteome</keyword>
<keyword id="KW-0749">Sporulation</keyword>
<organism>
    <name type="scientific">Bacillus cereus (strain ATCC 14579 / DSM 31 / CCUG 7414 / JCM 2152 / NBRC 15305 / NCIMB 9373 / NCTC 2599 / NRRL B-3711)</name>
    <dbReference type="NCBI Taxonomy" id="226900"/>
    <lineage>
        <taxon>Bacteria</taxon>
        <taxon>Bacillati</taxon>
        <taxon>Bacillota</taxon>
        <taxon>Bacilli</taxon>
        <taxon>Bacillales</taxon>
        <taxon>Bacillaceae</taxon>
        <taxon>Bacillus</taxon>
        <taxon>Bacillus cereus group</taxon>
    </lineage>
</organism>
<name>MECA2_BACCR</name>
<accession>Q81FS9</accession>
<feature type="chain" id="PRO_0000212263" description="Adapter protein MecA 2">
    <location>
        <begin position="1"/>
        <end position="202"/>
    </location>
</feature>
<protein>
    <recommendedName>
        <fullName>Adapter protein MecA 2</fullName>
    </recommendedName>
</protein>
<comment type="function">
    <text evidence="1">Enables the recognition and targeting of unfolded and aggregated proteins to the ClpC protease or to other proteins involved in proteolysis. Acts negatively in the development of competence by binding ComK and recruiting it to the ClpCP protease. When overexpressed, inhibits sporulation. Also involved in Spx degradation by ClpC (By similarity).</text>
</comment>
<comment type="subunit">
    <text evidence="1">Homodimer.</text>
</comment>
<comment type="domain">
    <text>The N-terminal domain has binding sites for ComK and probably for unfolded/aggregated proteins; the C-terminal domain interacts with ClpC.</text>
</comment>
<comment type="similarity">
    <text evidence="2">Belongs to the MecA family.</text>
</comment>
<evidence type="ECO:0000250" key="1"/>
<evidence type="ECO:0000305" key="2"/>
<proteinExistence type="inferred from homology"/>